<accession>Q92BV2</accession>
<reference key="1">
    <citation type="journal article" date="2001" name="Science">
        <title>Comparative genomics of Listeria species.</title>
        <authorList>
            <person name="Glaser P."/>
            <person name="Frangeul L."/>
            <person name="Buchrieser C."/>
            <person name="Rusniok C."/>
            <person name="Amend A."/>
            <person name="Baquero F."/>
            <person name="Berche P."/>
            <person name="Bloecker H."/>
            <person name="Brandt P."/>
            <person name="Chakraborty T."/>
            <person name="Charbit A."/>
            <person name="Chetouani F."/>
            <person name="Couve E."/>
            <person name="de Daruvar A."/>
            <person name="Dehoux P."/>
            <person name="Domann E."/>
            <person name="Dominguez-Bernal G."/>
            <person name="Duchaud E."/>
            <person name="Durant L."/>
            <person name="Dussurget O."/>
            <person name="Entian K.-D."/>
            <person name="Fsihi H."/>
            <person name="Garcia-del Portillo F."/>
            <person name="Garrido P."/>
            <person name="Gautier L."/>
            <person name="Goebel W."/>
            <person name="Gomez-Lopez N."/>
            <person name="Hain T."/>
            <person name="Hauf J."/>
            <person name="Jackson D."/>
            <person name="Jones L.-M."/>
            <person name="Kaerst U."/>
            <person name="Kreft J."/>
            <person name="Kuhn M."/>
            <person name="Kunst F."/>
            <person name="Kurapkat G."/>
            <person name="Madueno E."/>
            <person name="Maitournam A."/>
            <person name="Mata Vicente J."/>
            <person name="Ng E."/>
            <person name="Nedjari H."/>
            <person name="Nordsiek G."/>
            <person name="Novella S."/>
            <person name="de Pablos B."/>
            <person name="Perez-Diaz J.-C."/>
            <person name="Purcell R."/>
            <person name="Remmel B."/>
            <person name="Rose M."/>
            <person name="Schlueter T."/>
            <person name="Simoes N."/>
            <person name="Tierrez A."/>
            <person name="Vazquez-Boland J.-A."/>
            <person name="Voss H."/>
            <person name="Wehland J."/>
            <person name="Cossart P."/>
        </authorList>
    </citation>
    <scope>NUCLEOTIDE SEQUENCE [LARGE SCALE GENOMIC DNA]</scope>
    <source>
        <strain>ATCC BAA-680 / CLIP 11262</strain>
    </source>
</reference>
<name>MUTL_LISIN</name>
<keyword id="KW-0227">DNA damage</keyword>
<keyword id="KW-0234">DNA repair</keyword>
<evidence type="ECO:0000255" key="1">
    <source>
        <dbReference type="HAMAP-Rule" id="MF_00149"/>
    </source>
</evidence>
<evidence type="ECO:0000256" key="2">
    <source>
        <dbReference type="SAM" id="MobiDB-lite"/>
    </source>
</evidence>
<feature type="chain" id="PRO_0000177952" description="DNA mismatch repair protein MutL">
    <location>
        <begin position="1"/>
        <end position="603"/>
    </location>
</feature>
<feature type="region of interest" description="Disordered" evidence="2">
    <location>
        <begin position="336"/>
        <end position="372"/>
    </location>
</feature>
<feature type="compositionally biased region" description="Basic and acidic residues" evidence="2">
    <location>
        <begin position="336"/>
        <end position="346"/>
    </location>
</feature>
<protein>
    <recommendedName>
        <fullName evidence="1">DNA mismatch repair protein MutL</fullName>
    </recommendedName>
</protein>
<organism>
    <name type="scientific">Listeria innocua serovar 6a (strain ATCC BAA-680 / CLIP 11262)</name>
    <dbReference type="NCBI Taxonomy" id="272626"/>
    <lineage>
        <taxon>Bacteria</taxon>
        <taxon>Bacillati</taxon>
        <taxon>Bacillota</taxon>
        <taxon>Bacilli</taxon>
        <taxon>Bacillales</taxon>
        <taxon>Listeriaceae</taxon>
        <taxon>Listeria</taxon>
    </lineage>
</organism>
<dbReference type="EMBL" id="AL596168">
    <property type="protein sequence ID" value="CAC96672.1"/>
    <property type="molecule type" value="Genomic_DNA"/>
</dbReference>
<dbReference type="PIR" id="AH1612">
    <property type="entry name" value="AH1612"/>
</dbReference>
<dbReference type="RefSeq" id="WP_010991534.1">
    <property type="nucleotide sequence ID" value="NC_003212.1"/>
</dbReference>
<dbReference type="SMR" id="Q92BV2"/>
<dbReference type="STRING" id="272626.gene:17565772"/>
<dbReference type="KEGG" id="lin:mutL"/>
<dbReference type="eggNOG" id="COG0323">
    <property type="taxonomic scope" value="Bacteria"/>
</dbReference>
<dbReference type="HOGENOM" id="CLU_004131_4_1_9"/>
<dbReference type="OrthoDB" id="9763467at2"/>
<dbReference type="Proteomes" id="UP000002513">
    <property type="component" value="Chromosome"/>
</dbReference>
<dbReference type="GO" id="GO:0032300">
    <property type="term" value="C:mismatch repair complex"/>
    <property type="evidence" value="ECO:0007669"/>
    <property type="project" value="InterPro"/>
</dbReference>
<dbReference type="GO" id="GO:0005524">
    <property type="term" value="F:ATP binding"/>
    <property type="evidence" value="ECO:0007669"/>
    <property type="project" value="InterPro"/>
</dbReference>
<dbReference type="GO" id="GO:0016887">
    <property type="term" value="F:ATP hydrolysis activity"/>
    <property type="evidence" value="ECO:0007669"/>
    <property type="project" value="InterPro"/>
</dbReference>
<dbReference type="GO" id="GO:0140664">
    <property type="term" value="F:ATP-dependent DNA damage sensor activity"/>
    <property type="evidence" value="ECO:0007669"/>
    <property type="project" value="InterPro"/>
</dbReference>
<dbReference type="GO" id="GO:0030983">
    <property type="term" value="F:mismatched DNA binding"/>
    <property type="evidence" value="ECO:0007669"/>
    <property type="project" value="InterPro"/>
</dbReference>
<dbReference type="GO" id="GO:0006298">
    <property type="term" value="P:mismatch repair"/>
    <property type="evidence" value="ECO:0007669"/>
    <property type="project" value="UniProtKB-UniRule"/>
</dbReference>
<dbReference type="CDD" id="cd16926">
    <property type="entry name" value="HATPase_MutL-MLH-PMS-like"/>
    <property type="match status" value="1"/>
</dbReference>
<dbReference type="CDD" id="cd00782">
    <property type="entry name" value="MutL_Trans"/>
    <property type="match status" value="1"/>
</dbReference>
<dbReference type="FunFam" id="3.30.1370.100:FF:000004">
    <property type="entry name" value="DNA mismatch repair endonuclease MutL"/>
    <property type="match status" value="1"/>
</dbReference>
<dbReference type="FunFam" id="3.30.230.10:FF:000036">
    <property type="entry name" value="DNA mismatch repair endonuclease MutL"/>
    <property type="match status" value="1"/>
</dbReference>
<dbReference type="FunFam" id="3.30.565.10:FF:000003">
    <property type="entry name" value="DNA mismatch repair endonuclease MutL"/>
    <property type="match status" value="1"/>
</dbReference>
<dbReference type="Gene3D" id="3.30.230.10">
    <property type="match status" value="1"/>
</dbReference>
<dbReference type="Gene3D" id="3.30.565.10">
    <property type="entry name" value="Histidine kinase-like ATPase, C-terminal domain"/>
    <property type="match status" value="1"/>
</dbReference>
<dbReference type="Gene3D" id="3.30.1540.20">
    <property type="entry name" value="MutL, C-terminal domain, dimerisation subdomain"/>
    <property type="match status" value="1"/>
</dbReference>
<dbReference type="Gene3D" id="3.30.1370.100">
    <property type="entry name" value="MutL, C-terminal domain, regulatory subdomain"/>
    <property type="match status" value="1"/>
</dbReference>
<dbReference type="HAMAP" id="MF_00149">
    <property type="entry name" value="DNA_mis_repair"/>
    <property type="match status" value="1"/>
</dbReference>
<dbReference type="InterPro" id="IPR014762">
    <property type="entry name" value="DNA_mismatch_repair_CS"/>
</dbReference>
<dbReference type="InterPro" id="IPR020667">
    <property type="entry name" value="DNA_mismatch_repair_MutL"/>
</dbReference>
<dbReference type="InterPro" id="IPR013507">
    <property type="entry name" value="DNA_mismatch_S5_2-like"/>
</dbReference>
<dbReference type="InterPro" id="IPR036890">
    <property type="entry name" value="HATPase_C_sf"/>
</dbReference>
<dbReference type="InterPro" id="IPR002099">
    <property type="entry name" value="MutL/Mlh/PMS"/>
</dbReference>
<dbReference type="InterPro" id="IPR038973">
    <property type="entry name" value="MutL/Mlh/Pms-like"/>
</dbReference>
<dbReference type="InterPro" id="IPR014790">
    <property type="entry name" value="MutL_C"/>
</dbReference>
<dbReference type="InterPro" id="IPR042120">
    <property type="entry name" value="MutL_C_dimsub"/>
</dbReference>
<dbReference type="InterPro" id="IPR042121">
    <property type="entry name" value="MutL_C_regsub"/>
</dbReference>
<dbReference type="InterPro" id="IPR037198">
    <property type="entry name" value="MutL_C_sf"/>
</dbReference>
<dbReference type="InterPro" id="IPR020568">
    <property type="entry name" value="Ribosomal_Su5_D2-typ_SF"/>
</dbReference>
<dbReference type="InterPro" id="IPR014721">
    <property type="entry name" value="Ribsml_uS5_D2-typ_fold_subgr"/>
</dbReference>
<dbReference type="NCBIfam" id="TIGR00585">
    <property type="entry name" value="mutl"/>
    <property type="match status" value="1"/>
</dbReference>
<dbReference type="PANTHER" id="PTHR10073">
    <property type="entry name" value="DNA MISMATCH REPAIR PROTEIN MLH, PMS, MUTL"/>
    <property type="match status" value="1"/>
</dbReference>
<dbReference type="PANTHER" id="PTHR10073:SF12">
    <property type="entry name" value="DNA MISMATCH REPAIR PROTEIN MLH1"/>
    <property type="match status" value="1"/>
</dbReference>
<dbReference type="Pfam" id="PF01119">
    <property type="entry name" value="DNA_mis_repair"/>
    <property type="match status" value="1"/>
</dbReference>
<dbReference type="Pfam" id="PF13589">
    <property type="entry name" value="HATPase_c_3"/>
    <property type="match status" value="1"/>
</dbReference>
<dbReference type="Pfam" id="PF08676">
    <property type="entry name" value="MutL_C"/>
    <property type="match status" value="1"/>
</dbReference>
<dbReference type="SMART" id="SM01340">
    <property type="entry name" value="DNA_mis_repair"/>
    <property type="match status" value="1"/>
</dbReference>
<dbReference type="SMART" id="SM00853">
    <property type="entry name" value="MutL_C"/>
    <property type="match status" value="1"/>
</dbReference>
<dbReference type="SUPFAM" id="SSF55874">
    <property type="entry name" value="ATPase domain of HSP90 chaperone/DNA topoisomerase II/histidine kinase"/>
    <property type="match status" value="1"/>
</dbReference>
<dbReference type="SUPFAM" id="SSF118116">
    <property type="entry name" value="DNA mismatch repair protein MutL"/>
    <property type="match status" value="1"/>
</dbReference>
<dbReference type="SUPFAM" id="SSF54211">
    <property type="entry name" value="Ribosomal protein S5 domain 2-like"/>
    <property type="match status" value="1"/>
</dbReference>
<dbReference type="PROSITE" id="PS00058">
    <property type="entry name" value="DNA_MISMATCH_REPAIR_1"/>
    <property type="match status" value="1"/>
</dbReference>
<sequence length="603" mass="68208">MAKHIVELTDALSNKIAAGEVVERPASVVKELVENAIDAGSTVIDILVEEAGLNKITIIDNGSGIEEEDVAIAFLRHATSKIKNEADLFRVHTLGFRGEALPSIASVSHLTLETSTGETKGTTISLEGGKIIEQKSGHARKGTQIEVSQLFFNTPARLKYLKSLPTELGNITDILNRLALAHPDISFRFSHNGKPLLQTNGNGDLRQVIAAIYGVSIARKSIPVKAESLDFKISGYAVLPEVNRSNRNYISTIINGRFIKNFALVKAIQEGYHTLLPIGRFPIIVLQIEMDPIIVDVNVHPAKLEVRLSKEKELGQLISQMIKDAFHQLQLIPDGEVSKKQKEQQKSEQIQMSFEENRQPKEPPTLFSKPNIPEYVPSDEIVPKEDDFILETMPTYNPETQPEQVEEQKERIPKMYPIGQMHATYIFAQNENGLYIIDQHAAQERIKYEFYREKIGEVSRELQELLVPIVLEFPSDEYVRLEEQKAKLEEVGVFLENFGQNSFIIRAHPTWFPKDQEEEMLREIIDEALSAPSISIHKLREDTAIMMSCKKSIKANHYLTMQDMEALLDTLREASDPFTCPHGRPVIIQYSTYELEKMFKRVM</sequence>
<gene>
    <name evidence="1" type="primary">mutL</name>
    <name type="ordered locus">lin1441</name>
</gene>
<proteinExistence type="inferred from homology"/>
<comment type="function">
    <text evidence="1">This protein is involved in the repair of mismatches in DNA. It is required for dam-dependent methyl-directed DNA mismatch repair. May act as a 'molecular matchmaker', a protein that promotes the formation of a stable complex between two or more DNA-binding proteins in an ATP-dependent manner without itself being part of a final effector complex.</text>
</comment>
<comment type="similarity">
    <text evidence="1">Belongs to the DNA mismatch repair MutL/HexB family.</text>
</comment>